<dbReference type="EC" id="1.1.1.94" evidence="1"/>
<dbReference type="EMBL" id="AE001273">
    <property type="protein sequence ID" value="AAC68309.1"/>
    <property type="molecule type" value="Genomic_DNA"/>
</dbReference>
<dbReference type="PIR" id="A71480">
    <property type="entry name" value="A71480"/>
</dbReference>
<dbReference type="RefSeq" id="WP_010725315.1">
    <property type="nucleotide sequence ID" value="NC_000117.1"/>
</dbReference>
<dbReference type="SMR" id="O84719"/>
<dbReference type="FunCoup" id="O84719">
    <property type="interactions" value="217"/>
</dbReference>
<dbReference type="STRING" id="272561.CT_714"/>
<dbReference type="EnsemblBacteria" id="AAC68309">
    <property type="protein sequence ID" value="AAC68309"/>
    <property type="gene ID" value="CT_714"/>
</dbReference>
<dbReference type="KEGG" id="ctr:CT_714"/>
<dbReference type="PATRIC" id="fig|272561.5.peg.786"/>
<dbReference type="HOGENOM" id="CLU_033449_0_2_0"/>
<dbReference type="InParanoid" id="O84719"/>
<dbReference type="OrthoDB" id="9812273at2"/>
<dbReference type="UniPathway" id="UPA00940"/>
<dbReference type="Proteomes" id="UP000000431">
    <property type="component" value="Chromosome"/>
</dbReference>
<dbReference type="GO" id="GO:0005829">
    <property type="term" value="C:cytosol"/>
    <property type="evidence" value="ECO:0000318"/>
    <property type="project" value="GO_Central"/>
</dbReference>
<dbReference type="GO" id="GO:0047952">
    <property type="term" value="F:glycerol-3-phosphate dehydrogenase [NAD(P)+] activity"/>
    <property type="evidence" value="ECO:0000318"/>
    <property type="project" value="GO_Central"/>
</dbReference>
<dbReference type="GO" id="GO:0051287">
    <property type="term" value="F:NAD binding"/>
    <property type="evidence" value="ECO:0007669"/>
    <property type="project" value="InterPro"/>
</dbReference>
<dbReference type="GO" id="GO:0005975">
    <property type="term" value="P:carbohydrate metabolic process"/>
    <property type="evidence" value="ECO:0007669"/>
    <property type="project" value="InterPro"/>
</dbReference>
<dbReference type="GO" id="GO:0046167">
    <property type="term" value="P:glycerol-3-phosphate biosynthetic process"/>
    <property type="evidence" value="ECO:0007669"/>
    <property type="project" value="UniProtKB-UniRule"/>
</dbReference>
<dbReference type="GO" id="GO:0046168">
    <property type="term" value="P:glycerol-3-phosphate catabolic process"/>
    <property type="evidence" value="ECO:0007669"/>
    <property type="project" value="InterPro"/>
</dbReference>
<dbReference type="GO" id="GO:0006072">
    <property type="term" value="P:glycerol-3-phosphate metabolic process"/>
    <property type="evidence" value="ECO:0000318"/>
    <property type="project" value="GO_Central"/>
</dbReference>
<dbReference type="GO" id="GO:0006650">
    <property type="term" value="P:glycerophospholipid metabolic process"/>
    <property type="evidence" value="ECO:0007669"/>
    <property type="project" value="UniProtKB-UniRule"/>
</dbReference>
<dbReference type="GO" id="GO:0008654">
    <property type="term" value="P:phospholipid biosynthetic process"/>
    <property type="evidence" value="ECO:0007669"/>
    <property type="project" value="UniProtKB-KW"/>
</dbReference>
<dbReference type="FunFam" id="1.10.1040.10:FF:000001">
    <property type="entry name" value="Glycerol-3-phosphate dehydrogenase [NAD(P)+]"/>
    <property type="match status" value="1"/>
</dbReference>
<dbReference type="Gene3D" id="1.10.1040.10">
    <property type="entry name" value="N-(1-d-carboxylethyl)-l-norvaline Dehydrogenase, domain 2"/>
    <property type="match status" value="1"/>
</dbReference>
<dbReference type="Gene3D" id="3.40.50.720">
    <property type="entry name" value="NAD(P)-binding Rossmann-like Domain"/>
    <property type="match status" value="1"/>
</dbReference>
<dbReference type="HAMAP" id="MF_00394">
    <property type="entry name" value="NAD_Glyc3P_dehydrog"/>
    <property type="match status" value="1"/>
</dbReference>
<dbReference type="InterPro" id="IPR008927">
    <property type="entry name" value="6-PGluconate_DH-like_C_sf"/>
</dbReference>
<dbReference type="InterPro" id="IPR013328">
    <property type="entry name" value="6PGD_dom2"/>
</dbReference>
<dbReference type="InterPro" id="IPR006168">
    <property type="entry name" value="G3P_DH_NAD-dep"/>
</dbReference>
<dbReference type="InterPro" id="IPR006109">
    <property type="entry name" value="G3P_DH_NAD-dep_C"/>
</dbReference>
<dbReference type="InterPro" id="IPR011128">
    <property type="entry name" value="G3P_DH_NAD-dep_N"/>
</dbReference>
<dbReference type="InterPro" id="IPR036291">
    <property type="entry name" value="NAD(P)-bd_dom_sf"/>
</dbReference>
<dbReference type="NCBIfam" id="NF000940">
    <property type="entry name" value="PRK00094.1-2"/>
    <property type="match status" value="1"/>
</dbReference>
<dbReference type="NCBIfam" id="NF000942">
    <property type="entry name" value="PRK00094.1-4"/>
    <property type="match status" value="1"/>
</dbReference>
<dbReference type="PANTHER" id="PTHR11728">
    <property type="entry name" value="GLYCEROL-3-PHOSPHATE DEHYDROGENASE"/>
    <property type="match status" value="1"/>
</dbReference>
<dbReference type="PANTHER" id="PTHR11728:SF1">
    <property type="entry name" value="GLYCEROL-3-PHOSPHATE DEHYDROGENASE [NAD(+)] 2, CHLOROPLASTIC"/>
    <property type="match status" value="1"/>
</dbReference>
<dbReference type="Pfam" id="PF07479">
    <property type="entry name" value="NAD_Gly3P_dh_C"/>
    <property type="match status" value="1"/>
</dbReference>
<dbReference type="Pfam" id="PF01210">
    <property type="entry name" value="NAD_Gly3P_dh_N"/>
    <property type="match status" value="1"/>
</dbReference>
<dbReference type="PIRSF" id="PIRSF000114">
    <property type="entry name" value="Glycerol-3-P_dh"/>
    <property type="match status" value="1"/>
</dbReference>
<dbReference type="PRINTS" id="PR00077">
    <property type="entry name" value="GPDHDRGNASE"/>
</dbReference>
<dbReference type="SUPFAM" id="SSF48179">
    <property type="entry name" value="6-phosphogluconate dehydrogenase C-terminal domain-like"/>
    <property type="match status" value="1"/>
</dbReference>
<dbReference type="SUPFAM" id="SSF51735">
    <property type="entry name" value="NAD(P)-binding Rossmann-fold domains"/>
    <property type="match status" value="1"/>
</dbReference>
<dbReference type="PROSITE" id="PS00957">
    <property type="entry name" value="NAD_G3PDH"/>
    <property type="match status" value="1"/>
</dbReference>
<comment type="function">
    <text evidence="1">Catalyzes the reduction of the glycolytic intermediate dihydroxyacetone phosphate (DHAP) to sn-glycerol 3-phosphate (G3P), the key precursor for phospholipid synthesis.</text>
</comment>
<comment type="catalytic activity">
    <reaction evidence="1">
        <text>sn-glycerol 3-phosphate + NAD(+) = dihydroxyacetone phosphate + NADH + H(+)</text>
        <dbReference type="Rhea" id="RHEA:11092"/>
        <dbReference type="ChEBI" id="CHEBI:15378"/>
        <dbReference type="ChEBI" id="CHEBI:57540"/>
        <dbReference type="ChEBI" id="CHEBI:57597"/>
        <dbReference type="ChEBI" id="CHEBI:57642"/>
        <dbReference type="ChEBI" id="CHEBI:57945"/>
        <dbReference type="EC" id="1.1.1.94"/>
    </reaction>
    <physiologicalReaction direction="right-to-left" evidence="1">
        <dbReference type="Rhea" id="RHEA:11094"/>
    </physiologicalReaction>
</comment>
<comment type="catalytic activity">
    <reaction evidence="1">
        <text>sn-glycerol 3-phosphate + NADP(+) = dihydroxyacetone phosphate + NADPH + H(+)</text>
        <dbReference type="Rhea" id="RHEA:11096"/>
        <dbReference type="ChEBI" id="CHEBI:15378"/>
        <dbReference type="ChEBI" id="CHEBI:57597"/>
        <dbReference type="ChEBI" id="CHEBI:57642"/>
        <dbReference type="ChEBI" id="CHEBI:57783"/>
        <dbReference type="ChEBI" id="CHEBI:58349"/>
        <dbReference type="EC" id="1.1.1.94"/>
    </reaction>
    <physiologicalReaction direction="right-to-left" evidence="1">
        <dbReference type="Rhea" id="RHEA:11098"/>
    </physiologicalReaction>
</comment>
<comment type="pathway">
    <text evidence="1">Membrane lipid metabolism; glycerophospholipid metabolism.</text>
</comment>
<comment type="subcellular location">
    <subcellularLocation>
        <location evidence="1">Cytoplasm</location>
    </subcellularLocation>
</comment>
<comment type="similarity">
    <text evidence="1">Belongs to the NAD-dependent glycerol-3-phosphate dehydrogenase family.</text>
</comment>
<keyword id="KW-0963">Cytoplasm</keyword>
<keyword id="KW-0444">Lipid biosynthesis</keyword>
<keyword id="KW-0443">Lipid metabolism</keyword>
<keyword id="KW-0520">NAD</keyword>
<keyword id="KW-0521">NADP</keyword>
<keyword id="KW-0547">Nucleotide-binding</keyword>
<keyword id="KW-0560">Oxidoreductase</keyword>
<keyword id="KW-0594">Phospholipid biosynthesis</keyword>
<keyword id="KW-1208">Phospholipid metabolism</keyword>
<keyword id="KW-1185">Reference proteome</keyword>
<sequence length="334" mass="36137">MKETIAYLGMGMWGFSLANLLANNGHRVVGWARNPALIEQLSVQRRHPAAPHISIPQNLSFTSHMEEALDGATMIVEGVTSAGMRPVLTQLKALTELRVPLVITSKGIEQNTGLLLSEIALEIFGRPAAQHLGYLSGPSIASEVLRGCPCSVVISAYNPDTLKQIHRAFLTPTFRVYPNSDLKGVALGGALKNVIAIACGISDGFRFGDNAKSGLVTRGLHEIRKFATIMGCRPDTLNGLAGLGDLCTTSFSAFSRNTLFGKLLAEGLTPEQAKTKIGMVVEGVYTALSAHQIATHHRIDMPITTSVYRVLYENLDIQEGIAQLLQRDTKEEYL</sequence>
<organism>
    <name type="scientific">Chlamydia trachomatis serovar D (strain ATCC VR-885 / DSM 19411 / UW-3/Cx)</name>
    <dbReference type="NCBI Taxonomy" id="272561"/>
    <lineage>
        <taxon>Bacteria</taxon>
        <taxon>Pseudomonadati</taxon>
        <taxon>Chlamydiota</taxon>
        <taxon>Chlamydiia</taxon>
        <taxon>Chlamydiales</taxon>
        <taxon>Chlamydiaceae</taxon>
        <taxon>Chlamydia/Chlamydophila group</taxon>
        <taxon>Chlamydia</taxon>
    </lineage>
</organism>
<evidence type="ECO:0000255" key="1">
    <source>
        <dbReference type="HAMAP-Rule" id="MF_00394"/>
    </source>
</evidence>
<feature type="chain" id="PRO_0000137945" description="Glycerol-3-phosphate dehydrogenase [NAD(P)+]">
    <location>
        <begin position="1"/>
        <end position="334"/>
    </location>
</feature>
<feature type="active site" description="Proton acceptor" evidence="1">
    <location>
        <position position="192"/>
    </location>
</feature>
<feature type="binding site" evidence="1">
    <location>
        <position position="13"/>
    </location>
    <ligand>
        <name>NADPH</name>
        <dbReference type="ChEBI" id="CHEBI:57783"/>
    </ligand>
</feature>
<feature type="binding site" evidence="1">
    <location>
        <position position="33"/>
    </location>
    <ligand>
        <name>NADPH</name>
        <dbReference type="ChEBI" id="CHEBI:57783"/>
    </ligand>
</feature>
<feature type="binding site" evidence="1">
    <location>
        <position position="106"/>
    </location>
    <ligand>
        <name>NADPH</name>
        <dbReference type="ChEBI" id="CHEBI:57783"/>
    </ligand>
</feature>
<feature type="binding site" evidence="1">
    <location>
        <position position="106"/>
    </location>
    <ligand>
        <name>sn-glycerol 3-phosphate</name>
        <dbReference type="ChEBI" id="CHEBI:57597"/>
    </ligand>
</feature>
<feature type="binding site" evidence="1">
    <location>
        <position position="137"/>
    </location>
    <ligand>
        <name>sn-glycerol 3-phosphate</name>
        <dbReference type="ChEBI" id="CHEBI:57597"/>
    </ligand>
</feature>
<feature type="binding site" evidence="1">
    <location>
        <position position="139"/>
    </location>
    <ligand>
        <name>sn-glycerol 3-phosphate</name>
        <dbReference type="ChEBI" id="CHEBI:57597"/>
    </ligand>
</feature>
<feature type="binding site" evidence="1">
    <location>
        <position position="141"/>
    </location>
    <ligand>
        <name>NADPH</name>
        <dbReference type="ChEBI" id="CHEBI:57783"/>
    </ligand>
</feature>
<feature type="binding site" evidence="1">
    <location>
        <position position="192"/>
    </location>
    <ligand>
        <name>sn-glycerol 3-phosphate</name>
        <dbReference type="ChEBI" id="CHEBI:57597"/>
    </ligand>
</feature>
<feature type="binding site" evidence="1">
    <location>
        <position position="245"/>
    </location>
    <ligand>
        <name>sn-glycerol 3-phosphate</name>
        <dbReference type="ChEBI" id="CHEBI:57597"/>
    </ligand>
</feature>
<feature type="binding site" evidence="1">
    <location>
        <position position="255"/>
    </location>
    <ligand>
        <name>sn-glycerol 3-phosphate</name>
        <dbReference type="ChEBI" id="CHEBI:57597"/>
    </ligand>
</feature>
<feature type="binding site" evidence="1">
    <location>
        <position position="256"/>
    </location>
    <ligand>
        <name>NADPH</name>
        <dbReference type="ChEBI" id="CHEBI:57783"/>
    </ligand>
</feature>
<feature type="binding site" evidence="1">
    <location>
        <position position="256"/>
    </location>
    <ligand>
        <name>sn-glycerol 3-phosphate</name>
        <dbReference type="ChEBI" id="CHEBI:57597"/>
    </ligand>
</feature>
<feature type="binding site" evidence="1">
    <location>
        <position position="257"/>
    </location>
    <ligand>
        <name>sn-glycerol 3-phosphate</name>
        <dbReference type="ChEBI" id="CHEBI:57597"/>
    </ligand>
</feature>
<feature type="binding site" evidence="1">
    <location>
        <position position="280"/>
    </location>
    <ligand>
        <name>NADPH</name>
        <dbReference type="ChEBI" id="CHEBI:57783"/>
    </ligand>
</feature>
<feature type="binding site" evidence="1">
    <location>
        <position position="282"/>
    </location>
    <ligand>
        <name>NADPH</name>
        <dbReference type="ChEBI" id="CHEBI:57783"/>
    </ligand>
</feature>
<name>GPDA_CHLTR</name>
<proteinExistence type="inferred from homology"/>
<gene>
    <name evidence="1" type="primary">gpsA</name>
    <name type="ordered locus">CT_714</name>
</gene>
<protein>
    <recommendedName>
        <fullName evidence="1">Glycerol-3-phosphate dehydrogenase [NAD(P)+]</fullName>
        <ecNumber evidence="1">1.1.1.94</ecNumber>
    </recommendedName>
    <alternativeName>
        <fullName evidence="1">NAD(P)(+)-dependent glycerol-3-phosphate dehydrogenase</fullName>
    </alternativeName>
    <alternativeName>
        <fullName evidence="1">NAD(P)H-dependent dihydroxyacetone-phosphate reductase</fullName>
    </alternativeName>
</protein>
<accession>O84719</accession>
<reference key="1">
    <citation type="journal article" date="1998" name="Science">
        <title>Genome sequence of an obligate intracellular pathogen of humans: Chlamydia trachomatis.</title>
        <authorList>
            <person name="Stephens R.S."/>
            <person name="Kalman S."/>
            <person name="Lammel C.J."/>
            <person name="Fan J."/>
            <person name="Marathe R."/>
            <person name="Aravind L."/>
            <person name="Mitchell W.P."/>
            <person name="Olinger L."/>
            <person name="Tatusov R.L."/>
            <person name="Zhao Q."/>
            <person name="Koonin E.V."/>
            <person name="Davis R.W."/>
        </authorList>
    </citation>
    <scope>NUCLEOTIDE SEQUENCE [LARGE SCALE GENOMIC DNA]</scope>
    <source>
        <strain>ATCC VR-885 / DSM 19411 / UW-3/Cx</strain>
    </source>
</reference>